<organism>
    <name type="scientific">Invertebrate iridescent virus 6</name>
    <name type="common">IIV-6</name>
    <name type="synonym">Chilo iridescent virus</name>
    <dbReference type="NCBI Taxonomy" id="176652"/>
    <lineage>
        <taxon>Viruses</taxon>
        <taxon>Varidnaviria</taxon>
        <taxon>Bamfordvirae</taxon>
        <taxon>Nucleocytoviricota</taxon>
        <taxon>Megaviricetes</taxon>
        <taxon>Pimascovirales</taxon>
        <taxon>Iridoviridae</taxon>
        <taxon>Betairidovirinae</taxon>
        <taxon>Iridovirus</taxon>
    </lineage>
</organism>
<keyword id="KW-1185">Reference proteome</keyword>
<organismHost>
    <name type="scientific">Acheta domesticus</name>
    <name type="common">House cricket</name>
    <dbReference type="NCBI Taxonomy" id="6997"/>
</organismHost>
<organismHost>
    <name type="scientific">Chilo suppressalis</name>
    <name type="common">Asiatic rice borer moth</name>
    <dbReference type="NCBI Taxonomy" id="168631"/>
</organismHost>
<organismHost>
    <name type="scientific">Gryllus bimaculatus</name>
    <name type="common">Two-spotted cricket</name>
    <dbReference type="NCBI Taxonomy" id="6999"/>
</organismHost>
<organismHost>
    <name type="scientific">Gryllus campestris</name>
    <dbReference type="NCBI Taxonomy" id="58607"/>
</organismHost>
<organismHost>
    <name type="scientific">Spodoptera frugiperda</name>
    <name type="common">Fall armyworm</name>
    <dbReference type="NCBI Taxonomy" id="7108"/>
</organismHost>
<name>437L_IIV6</name>
<dbReference type="EMBL" id="AF303741">
    <property type="protein sequence ID" value="AAK82297.1"/>
    <property type="molecule type" value="Genomic_DNA"/>
</dbReference>
<dbReference type="RefSeq" id="NP_149900.1">
    <property type="nucleotide sequence ID" value="NC_003038.1"/>
</dbReference>
<dbReference type="SMR" id="Q91F88"/>
<dbReference type="KEGG" id="vg:1733365"/>
<dbReference type="Proteomes" id="UP000001359">
    <property type="component" value="Genome"/>
</dbReference>
<feature type="chain" id="PRO_0000377891" description="Uncharacterized protein 437L">
    <location>
        <begin position="1"/>
        <end position="65"/>
    </location>
</feature>
<proteinExistence type="predicted"/>
<gene>
    <name type="ORF">IIV6-437L</name>
</gene>
<sequence length="65" mass="7583">MDNLYSQINSEININVLKLCRLISKNFNNGPEPKELYKLWIDALPKEVTEDFVIEESKPETNLDD</sequence>
<accession>Q91F88</accession>
<protein>
    <recommendedName>
        <fullName>Uncharacterized protein 437L</fullName>
    </recommendedName>
</protein>
<reference key="1">
    <citation type="journal article" date="2001" name="Virology">
        <title>Analysis of the first complete DNA sequence of an invertebrate iridovirus: coding strategy of the genome of Chilo iridescent virus.</title>
        <authorList>
            <person name="Jakob N.J."/>
            <person name="Mueller K."/>
            <person name="Bahr U."/>
            <person name="Darai G."/>
        </authorList>
    </citation>
    <scope>NUCLEOTIDE SEQUENCE [LARGE SCALE GENOMIC DNA]</scope>
</reference>
<reference key="2">
    <citation type="journal article" date="2007" name="Virol. J.">
        <title>Comparative genomic analysis of the family Iridoviridae: re-annotating and defining the core set of iridovirus genes.</title>
        <authorList>
            <person name="Eaton H.E."/>
            <person name="Metcalf J."/>
            <person name="Penny E."/>
            <person name="Tcherepanov V."/>
            <person name="Upton C."/>
            <person name="Brunetti C.R."/>
        </authorList>
    </citation>
    <scope>GENOME REANNOTATION</scope>
</reference>